<sequence length="86" mass="10262">MAEYDKLRLEWDCRRGMLELDKIIMPFYLEQFDNLTETQKATFVRLLACTDLQLFSWLFKRARASDTELQQMVDLILEKQGVVINN</sequence>
<proteinExistence type="inferred from homology"/>
<reference key="1">
    <citation type="journal article" date="2004" name="Nat. Biotechnol.">
        <title>The genome sequence of the capnophilic rumen bacterium Mannheimia succiniciproducens.</title>
        <authorList>
            <person name="Hong S.H."/>
            <person name="Kim J.S."/>
            <person name="Lee S.Y."/>
            <person name="In Y.H."/>
            <person name="Choi S.S."/>
            <person name="Rih J.-K."/>
            <person name="Kim C.H."/>
            <person name="Jeong H."/>
            <person name="Hur C.G."/>
            <person name="Kim J.J."/>
        </authorList>
    </citation>
    <scope>NUCLEOTIDE SEQUENCE [LARGE SCALE GENOMIC DNA]</scope>
    <source>
        <strain>KCTC 0769BP / MBEL55E</strain>
    </source>
</reference>
<keyword id="KW-0143">Chaperone</keyword>
<keyword id="KW-0963">Cytoplasm</keyword>
<gene>
    <name type="primary">sdhE</name>
    <name type="ordered locus">MS2227</name>
</gene>
<feature type="chain" id="PRO_0000214405" description="FAD assembly factor SdhE">
    <location>
        <begin position="1"/>
        <end position="86"/>
    </location>
</feature>
<organism>
    <name type="scientific">Mannheimia succiniciproducens (strain KCTC 0769BP / MBEL55E)</name>
    <dbReference type="NCBI Taxonomy" id="221988"/>
    <lineage>
        <taxon>Bacteria</taxon>
        <taxon>Pseudomonadati</taxon>
        <taxon>Pseudomonadota</taxon>
        <taxon>Gammaproteobacteria</taxon>
        <taxon>Pasteurellales</taxon>
        <taxon>Pasteurellaceae</taxon>
        <taxon>Basfia</taxon>
    </lineage>
</organism>
<name>SDHE_MANSM</name>
<protein>
    <recommendedName>
        <fullName>FAD assembly factor SdhE</fullName>
    </recommendedName>
</protein>
<comment type="function">
    <text evidence="1">An FAD assembly protein, which accelerates covalent attachment of the cofactor into other proteins. Plays an essential role in the assembly of succinate dehydrogenase (SDH, respiratory complex II), an enzyme complex that is a component of both the tricarboxylic acid cycle and the electron transport chain, and which couples the oxidation of succinate to fumarate with the reduction of ubiquinone (coenzyme Q) to ubiquinol. Required for flavinylation (covalent attachment of FAD) of the flavoprotein subunit SdhA of SDH and other flavinylated proteins as well.</text>
</comment>
<comment type="subcellular location">
    <subcellularLocation>
        <location evidence="1">Cytoplasm</location>
    </subcellularLocation>
</comment>
<comment type="similarity">
    <text evidence="2">Belongs to the SdhE FAD assembly factor family.</text>
</comment>
<comment type="sequence caution" evidence="2">
    <conflict type="erroneous initiation">
        <sequence resource="EMBL-CDS" id="AAU38834"/>
    </conflict>
    <text>Extended N-terminus.</text>
</comment>
<evidence type="ECO:0000250" key="1">
    <source>
        <dbReference type="UniProtKB" id="G4V4G2"/>
    </source>
</evidence>
<evidence type="ECO:0000305" key="2"/>
<dbReference type="EMBL" id="AE016827">
    <property type="protein sequence ID" value="AAU38834.1"/>
    <property type="status" value="ALT_INIT"/>
    <property type="molecule type" value="Genomic_DNA"/>
</dbReference>
<dbReference type="RefSeq" id="WP_041640084.1">
    <property type="nucleotide sequence ID" value="NC_006300.1"/>
</dbReference>
<dbReference type="SMR" id="Q65QC6"/>
<dbReference type="STRING" id="221988.MS2227"/>
<dbReference type="KEGG" id="msu:MS2227"/>
<dbReference type="eggNOG" id="COG2938">
    <property type="taxonomic scope" value="Bacteria"/>
</dbReference>
<dbReference type="HOGENOM" id="CLU_103054_2_2_6"/>
<dbReference type="OrthoDB" id="9180899at2"/>
<dbReference type="Proteomes" id="UP000000607">
    <property type="component" value="Chromosome"/>
</dbReference>
<dbReference type="GO" id="GO:0005737">
    <property type="term" value="C:cytoplasm"/>
    <property type="evidence" value="ECO:0007669"/>
    <property type="project" value="UniProtKB-SubCell"/>
</dbReference>
<dbReference type="GO" id="GO:0006105">
    <property type="term" value="P:succinate metabolic process"/>
    <property type="evidence" value="ECO:0007669"/>
    <property type="project" value="TreeGrafter"/>
</dbReference>
<dbReference type="Gene3D" id="1.10.150.250">
    <property type="entry name" value="Flavinator of succinate dehydrogenase"/>
    <property type="match status" value="1"/>
</dbReference>
<dbReference type="InterPro" id="IPR005631">
    <property type="entry name" value="SDH"/>
</dbReference>
<dbReference type="InterPro" id="IPR036714">
    <property type="entry name" value="SDH_sf"/>
</dbReference>
<dbReference type="InterPro" id="IPR050531">
    <property type="entry name" value="SdhE_FAD_assembly_factor"/>
</dbReference>
<dbReference type="PANTHER" id="PTHR39585">
    <property type="entry name" value="FAD ASSEMBLY FACTOR SDHE"/>
    <property type="match status" value="1"/>
</dbReference>
<dbReference type="PANTHER" id="PTHR39585:SF1">
    <property type="entry name" value="FAD ASSEMBLY FACTOR SDHE"/>
    <property type="match status" value="1"/>
</dbReference>
<dbReference type="Pfam" id="PF03937">
    <property type="entry name" value="Sdh5"/>
    <property type="match status" value="1"/>
</dbReference>
<dbReference type="SUPFAM" id="SSF109910">
    <property type="entry name" value="YgfY-like"/>
    <property type="match status" value="1"/>
</dbReference>
<accession>Q65QC6</accession>